<name>GET4A_XENLA</name>
<accession>Q6NRL4</accession>
<evidence type="ECO:0000250" key="1">
    <source>
        <dbReference type="UniProtKB" id="Q7L5D6"/>
    </source>
</evidence>
<evidence type="ECO:0000256" key="2">
    <source>
        <dbReference type="SAM" id="MobiDB-lite"/>
    </source>
</evidence>
<evidence type="ECO:0000305" key="3"/>
<reference key="1">
    <citation type="submission" date="2004-05" db="EMBL/GenBank/DDBJ databases">
        <authorList>
            <consortium name="NIH - Xenopus Gene Collection (XGC) project"/>
        </authorList>
    </citation>
    <scope>NUCLEOTIDE SEQUENCE [LARGE SCALE MRNA]</scope>
    <source>
        <tissue>Oocyte</tissue>
    </source>
</reference>
<organism>
    <name type="scientific">Xenopus laevis</name>
    <name type="common">African clawed frog</name>
    <dbReference type="NCBI Taxonomy" id="8355"/>
    <lineage>
        <taxon>Eukaryota</taxon>
        <taxon>Metazoa</taxon>
        <taxon>Chordata</taxon>
        <taxon>Craniata</taxon>
        <taxon>Vertebrata</taxon>
        <taxon>Euteleostomi</taxon>
        <taxon>Amphibia</taxon>
        <taxon>Batrachia</taxon>
        <taxon>Anura</taxon>
        <taxon>Pipoidea</taxon>
        <taxon>Pipidae</taxon>
        <taxon>Xenopodinae</taxon>
        <taxon>Xenopus</taxon>
        <taxon>Xenopus</taxon>
    </lineage>
</organism>
<comment type="function">
    <text evidence="1">As part of a cytosolic protein quality control complex, the bag6/bat3 complex, maintains misfolded and hydrophobic patches-containing proteins in a soluble state and participates in their proper delivery to the endoplasmic reticulum or alternatively can promote their sorting to the proteasome where they undergo degradation. The bag6/bat3 complex is involved in the post-translational delivery of tail-anchored/type II transmembrane proteins to the endoplasmic reticulum membrane. Similarly, the bag6/bat3 complex also functions as a sorting platform for proteins of the secretory pathway that are mislocalized to the cytosol either delivering them to the proteasome for degradation or to the endoplasmic reticulum. The bag6/bat3 complex also plays a role in the endoplasmic reticulum-associated degradation (ERAD), a quality control mechanism that eliminates unwanted proteins of the endoplasmic reticulum through their retrotranslocation to the cytosol and their targeting to the proteasome. It maintains these retrotranslocated proteins in an unfolded yet soluble state condition in the cytosol to ensure their proper delivery to the proteasome.</text>
</comment>
<comment type="subunit">
    <text evidence="1">Component of the bag6/bat3 complex.</text>
</comment>
<comment type="subcellular location">
    <subcellularLocation>
        <location evidence="1">Cytoplasm</location>
        <location evidence="1">Cytosol</location>
    </subcellularLocation>
</comment>
<comment type="similarity">
    <text evidence="3">Belongs to the GET4 family.</text>
</comment>
<proteinExistence type="evidence at transcript level"/>
<protein>
    <recommendedName>
        <fullName>Golgi to ER traffic protein 4 homolog A</fullName>
    </recommendedName>
</protein>
<gene>
    <name type="primary">get4-a</name>
</gene>
<sequence length="325" mass="36703">MAAAMAEQEGSKGSARNRGGVQRVEGKLRASVEKGDYYEAHQMYRTLFFRYMSQSKHIEARELMYSGALLFFSHSQQNSAADLSMLVLESLEKHEVKVTEELLENLAKLFSLMDPNSPERVAFVSRALKWSSGGSGKFGHQKLHQFLAITLWKEQNYYESRYHFLHSSDGEGCANMLVEYSSTRGYRSEVDMFVAQAVLQFLCLKNKTSASVVFTTYTQKHPSIERGPPFVQPLLNFIWFLLLAVEGGKLTVFTVLCEQYQPSLKRDPMYNEYLDRIGQLFFGLPPKQSSSYGGLLGNLLNSLMGSGEDDDVEDGQEDSSPIELD</sequence>
<feature type="chain" id="PRO_0000403725" description="Golgi to ER traffic protein 4 homolog A">
    <location>
        <begin position="1"/>
        <end position="325"/>
    </location>
</feature>
<feature type="region of interest" description="Disordered" evidence="2">
    <location>
        <begin position="1"/>
        <end position="22"/>
    </location>
</feature>
<feature type="region of interest" description="Disordered" evidence="2">
    <location>
        <begin position="306"/>
        <end position="325"/>
    </location>
</feature>
<feature type="compositionally biased region" description="Acidic residues" evidence="2">
    <location>
        <begin position="307"/>
        <end position="317"/>
    </location>
</feature>
<dbReference type="EMBL" id="BC070733">
    <property type="protein sequence ID" value="AAH70733.1"/>
    <property type="molecule type" value="mRNA"/>
</dbReference>
<dbReference type="RefSeq" id="NP_001084795.1">
    <property type="nucleotide sequence ID" value="NM_001091326.1"/>
</dbReference>
<dbReference type="SMR" id="Q6NRL4"/>
<dbReference type="DNASU" id="431835"/>
<dbReference type="GeneID" id="431835"/>
<dbReference type="KEGG" id="xla:431835"/>
<dbReference type="AGR" id="Xenbase:XB-GENE-975159"/>
<dbReference type="CTD" id="431835"/>
<dbReference type="Xenbase" id="XB-GENE-975159">
    <property type="gene designation" value="get4.L"/>
</dbReference>
<dbReference type="OrthoDB" id="10252405at2759"/>
<dbReference type="Proteomes" id="UP000186698">
    <property type="component" value="Chromosome 9_10L"/>
</dbReference>
<dbReference type="Bgee" id="431835">
    <property type="expression patterns" value="Expressed in pancreas and 19 other cell types or tissues"/>
</dbReference>
<dbReference type="GO" id="GO:0071818">
    <property type="term" value="C:BAT3 complex"/>
    <property type="evidence" value="ECO:0000250"/>
    <property type="project" value="UniProtKB"/>
</dbReference>
<dbReference type="GO" id="GO:0005829">
    <property type="term" value="C:cytosol"/>
    <property type="evidence" value="ECO:0000250"/>
    <property type="project" value="UniProtKB"/>
</dbReference>
<dbReference type="GO" id="GO:0045048">
    <property type="term" value="P:protein insertion into ER membrane"/>
    <property type="evidence" value="ECO:0000250"/>
    <property type="project" value="UniProtKB"/>
</dbReference>
<dbReference type="GO" id="GO:0071816">
    <property type="term" value="P:tail-anchored membrane protein insertion into ER membrane"/>
    <property type="evidence" value="ECO:0000250"/>
    <property type="project" value="UniProtKB"/>
</dbReference>
<dbReference type="FunFam" id="1.25.40.10:FF:000060">
    <property type="entry name" value="Golgi to ER traffic protein 4 homolog"/>
    <property type="match status" value="1"/>
</dbReference>
<dbReference type="Gene3D" id="1.25.40.10">
    <property type="entry name" value="Tetratricopeptide repeat domain"/>
    <property type="match status" value="1"/>
</dbReference>
<dbReference type="InterPro" id="IPR007317">
    <property type="entry name" value="GET4"/>
</dbReference>
<dbReference type="InterPro" id="IPR011990">
    <property type="entry name" value="TPR-like_helical_dom_sf"/>
</dbReference>
<dbReference type="PANTHER" id="PTHR12875">
    <property type="entry name" value="GOLGI TO ER TRAFFIC PROTEIN 4 HOMOLOG"/>
    <property type="match status" value="1"/>
</dbReference>
<dbReference type="PANTHER" id="PTHR12875:SF0">
    <property type="entry name" value="GOLGI TO ER TRAFFIC PROTEIN 4 HOMOLOG"/>
    <property type="match status" value="1"/>
</dbReference>
<dbReference type="Pfam" id="PF04190">
    <property type="entry name" value="GET4"/>
    <property type="match status" value="1"/>
</dbReference>
<keyword id="KW-0963">Cytoplasm</keyword>
<keyword id="KW-1185">Reference proteome</keyword>
<keyword id="KW-0813">Transport</keyword>